<evidence type="ECO:0000255" key="1">
    <source>
        <dbReference type="HAMAP-Rule" id="MF_00073"/>
    </source>
</evidence>
<dbReference type="EMBL" id="AM408590">
    <property type="protein sequence ID" value="CAL72543.1"/>
    <property type="molecule type" value="Genomic_DNA"/>
</dbReference>
<dbReference type="RefSeq" id="WP_003412985.1">
    <property type="nucleotide sequence ID" value="NC_008769.1"/>
</dbReference>
<dbReference type="SMR" id="A1KLN0"/>
<dbReference type="GeneID" id="45426534"/>
<dbReference type="KEGG" id="mbb:BCG_2555c"/>
<dbReference type="HOGENOM" id="CLU_087843_2_3_11"/>
<dbReference type="Proteomes" id="UP000001472">
    <property type="component" value="Chromosome"/>
</dbReference>
<dbReference type="GO" id="GO:0005829">
    <property type="term" value="C:cytosol"/>
    <property type="evidence" value="ECO:0007669"/>
    <property type="project" value="TreeGrafter"/>
</dbReference>
<dbReference type="GO" id="GO:0003723">
    <property type="term" value="F:RNA binding"/>
    <property type="evidence" value="ECO:0007669"/>
    <property type="project" value="UniProtKB-UniRule"/>
</dbReference>
<dbReference type="GO" id="GO:0006353">
    <property type="term" value="P:DNA-templated transcription termination"/>
    <property type="evidence" value="ECO:0007669"/>
    <property type="project" value="UniProtKB-UniRule"/>
</dbReference>
<dbReference type="GO" id="GO:0031564">
    <property type="term" value="P:transcription antitermination"/>
    <property type="evidence" value="ECO:0007669"/>
    <property type="project" value="UniProtKB-KW"/>
</dbReference>
<dbReference type="CDD" id="cd00619">
    <property type="entry name" value="Terminator_NusB"/>
    <property type="match status" value="1"/>
</dbReference>
<dbReference type="Gene3D" id="1.10.940.10">
    <property type="entry name" value="NusB-like"/>
    <property type="match status" value="1"/>
</dbReference>
<dbReference type="HAMAP" id="MF_00073">
    <property type="entry name" value="NusB"/>
    <property type="match status" value="1"/>
</dbReference>
<dbReference type="InterPro" id="IPR035926">
    <property type="entry name" value="NusB-like_sf"/>
</dbReference>
<dbReference type="InterPro" id="IPR011605">
    <property type="entry name" value="NusB_fam"/>
</dbReference>
<dbReference type="InterPro" id="IPR006027">
    <property type="entry name" value="NusB_RsmB_TIM44"/>
</dbReference>
<dbReference type="NCBIfam" id="TIGR01951">
    <property type="entry name" value="nusB"/>
    <property type="match status" value="1"/>
</dbReference>
<dbReference type="PANTHER" id="PTHR11078:SF3">
    <property type="entry name" value="ANTITERMINATION NUSB DOMAIN-CONTAINING PROTEIN"/>
    <property type="match status" value="1"/>
</dbReference>
<dbReference type="PANTHER" id="PTHR11078">
    <property type="entry name" value="N UTILIZATION SUBSTANCE PROTEIN B-RELATED"/>
    <property type="match status" value="1"/>
</dbReference>
<dbReference type="Pfam" id="PF01029">
    <property type="entry name" value="NusB"/>
    <property type="match status" value="1"/>
</dbReference>
<dbReference type="SUPFAM" id="SSF48013">
    <property type="entry name" value="NusB-like"/>
    <property type="match status" value="1"/>
</dbReference>
<proteinExistence type="inferred from homology"/>
<feature type="chain" id="PRO_1000023748" description="Transcription antitermination protein NusB">
    <location>
        <begin position="1"/>
        <end position="156"/>
    </location>
</feature>
<gene>
    <name evidence="1" type="primary">nusB</name>
    <name type="ordered locus">BCG_2555c</name>
</gene>
<name>NUSB_MYCBP</name>
<keyword id="KW-0694">RNA-binding</keyword>
<keyword id="KW-0804">Transcription</keyword>
<keyword id="KW-0889">Transcription antitermination</keyword>
<keyword id="KW-0805">Transcription regulation</keyword>
<sequence>MSDRKPVRGRHQARKRAVDLLFEAEVRGISAAEVVDTRAALAEAKPDIARLHPYTAAVARGVSEHAAHIDDLITAHLRGWTLDRLPAVDRAILRVSVWELLHAADVPEPVVVDEAVQLAKELSTDDSPGFVNGVLGQVMLVTPQLRAAAQAVRGGA</sequence>
<protein>
    <recommendedName>
        <fullName evidence="1">Transcription antitermination protein NusB</fullName>
    </recommendedName>
    <alternativeName>
        <fullName evidence="1">Antitermination factor NusB</fullName>
    </alternativeName>
</protein>
<comment type="function">
    <text evidence="1">Involved in transcription antitermination. Required for transcription of ribosomal RNA (rRNA) genes. Binds specifically to the boxA antiterminator sequence of the ribosomal RNA (rrn) operons.</text>
</comment>
<comment type="similarity">
    <text evidence="1">Belongs to the NusB family.</text>
</comment>
<reference key="1">
    <citation type="journal article" date="2007" name="Proc. Natl. Acad. Sci. U.S.A.">
        <title>Genome plasticity of BCG and impact on vaccine efficacy.</title>
        <authorList>
            <person name="Brosch R."/>
            <person name="Gordon S.V."/>
            <person name="Garnier T."/>
            <person name="Eiglmeier K."/>
            <person name="Frigui W."/>
            <person name="Valenti P."/>
            <person name="Dos Santos S."/>
            <person name="Duthoy S."/>
            <person name="Lacroix C."/>
            <person name="Garcia-Pelayo C."/>
            <person name="Inwald J.K."/>
            <person name="Golby P."/>
            <person name="Garcia J.N."/>
            <person name="Hewinson R.G."/>
            <person name="Behr M.A."/>
            <person name="Quail M.A."/>
            <person name="Churcher C."/>
            <person name="Barrell B.G."/>
            <person name="Parkhill J."/>
            <person name="Cole S.T."/>
        </authorList>
    </citation>
    <scope>NUCLEOTIDE SEQUENCE [LARGE SCALE GENOMIC DNA]</scope>
    <source>
        <strain>BCG / Pasteur 1173P2</strain>
    </source>
</reference>
<organism>
    <name type="scientific">Mycobacterium bovis (strain BCG / Pasteur 1173P2)</name>
    <dbReference type="NCBI Taxonomy" id="410289"/>
    <lineage>
        <taxon>Bacteria</taxon>
        <taxon>Bacillati</taxon>
        <taxon>Actinomycetota</taxon>
        <taxon>Actinomycetes</taxon>
        <taxon>Mycobacteriales</taxon>
        <taxon>Mycobacteriaceae</taxon>
        <taxon>Mycobacterium</taxon>
        <taxon>Mycobacterium tuberculosis complex</taxon>
    </lineage>
</organism>
<accession>A1KLN0</accession>